<comment type="function">
    <text evidence="1">Catalyzes the specific phosphorylation of 1,6-anhydro-N-acetylmuramic acid (anhMurNAc) with the simultaneous cleavage of the 1,6-anhydro ring, generating MurNAc-6-P. Is required for the utilization of anhMurNAc either imported from the medium or derived from its own cell wall murein, and thus plays a role in cell wall recycling.</text>
</comment>
<comment type="catalytic activity">
    <reaction evidence="1">
        <text>1,6-anhydro-N-acetyl-beta-muramate + ATP + H2O = N-acetyl-D-muramate 6-phosphate + ADP + H(+)</text>
        <dbReference type="Rhea" id="RHEA:24952"/>
        <dbReference type="ChEBI" id="CHEBI:15377"/>
        <dbReference type="ChEBI" id="CHEBI:15378"/>
        <dbReference type="ChEBI" id="CHEBI:30616"/>
        <dbReference type="ChEBI" id="CHEBI:58690"/>
        <dbReference type="ChEBI" id="CHEBI:58722"/>
        <dbReference type="ChEBI" id="CHEBI:456216"/>
        <dbReference type="EC" id="2.7.1.170"/>
    </reaction>
</comment>
<comment type="pathway">
    <text evidence="1">Amino-sugar metabolism; 1,6-anhydro-N-acetylmuramate degradation.</text>
</comment>
<comment type="pathway">
    <text evidence="1">Cell wall biogenesis; peptidoglycan recycling.</text>
</comment>
<comment type="similarity">
    <text evidence="1">Belongs to the anhydro-N-acetylmuramic acid kinase family.</text>
</comment>
<accession>Q81QG0</accession>
<accession>Q6HYN4</accession>
<accession>Q6KSN6</accession>
<proteinExistence type="inferred from homology"/>
<reference key="1">
    <citation type="journal article" date="2003" name="Nature">
        <title>The genome sequence of Bacillus anthracis Ames and comparison to closely related bacteria.</title>
        <authorList>
            <person name="Read T.D."/>
            <person name="Peterson S.N."/>
            <person name="Tourasse N.J."/>
            <person name="Baillie L.W."/>
            <person name="Paulsen I.T."/>
            <person name="Nelson K.E."/>
            <person name="Tettelin H."/>
            <person name="Fouts D.E."/>
            <person name="Eisen J.A."/>
            <person name="Gill S.R."/>
            <person name="Holtzapple E.K."/>
            <person name="Okstad O.A."/>
            <person name="Helgason E."/>
            <person name="Rilstone J."/>
            <person name="Wu M."/>
            <person name="Kolonay J.F."/>
            <person name="Beanan M.J."/>
            <person name="Dodson R.J."/>
            <person name="Brinkac L.M."/>
            <person name="Gwinn M.L."/>
            <person name="DeBoy R.T."/>
            <person name="Madpu R."/>
            <person name="Daugherty S.C."/>
            <person name="Durkin A.S."/>
            <person name="Haft D.H."/>
            <person name="Nelson W.C."/>
            <person name="Peterson J.D."/>
            <person name="Pop M."/>
            <person name="Khouri H.M."/>
            <person name="Radune D."/>
            <person name="Benton J.L."/>
            <person name="Mahamoud Y."/>
            <person name="Jiang L."/>
            <person name="Hance I.R."/>
            <person name="Weidman J.F."/>
            <person name="Berry K.J."/>
            <person name="Plaut R.D."/>
            <person name="Wolf A.M."/>
            <person name="Watkins K.L."/>
            <person name="Nierman W.C."/>
            <person name="Hazen A."/>
            <person name="Cline R.T."/>
            <person name="Redmond C."/>
            <person name="Thwaite J.E."/>
            <person name="White O."/>
            <person name="Salzberg S.L."/>
            <person name="Thomason B."/>
            <person name="Friedlander A.M."/>
            <person name="Koehler T.M."/>
            <person name="Hanna P.C."/>
            <person name="Kolstoe A.-B."/>
            <person name="Fraser C.M."/>
        </authorList>
    </citation>
    <scope>NUCLEOTIDE SEQUENCE [LARGE SCALE GENOMIC DNA]</scope>
    <source>
        <strain>Ames / isolate Porton</strain>
    </source>
</reference>
<reference key="2">
    <citation type="submission" date="2004-01" db="EMBL/GenBank/DDBJ databases">
        <title>Complete genome sequence of Bacillus anthracis Sterne.</title>
        <authorList>
            <person name="Brettin T.S."/>
            <person name="Bruce D."/>
            <person name="Challacombe J.F."/>
            <person name="Gilna P."/>
            <person name="Han C."/>
            <person name="Hill K."/>
            <person name="Hitchcock P."/>
            <person name="Jackson P."/>
            <person name="Keim P."/>
            <person name="Longmire J."/>
            <person name="Lucas S."/>
            <person name="Okinaka R."/>
            <person name="Richardson P."/>
            <person name="Rubin E."/>
            <person name="Tice H."/>
        </authorList>
    </citation>
    <scope>NUCLEOTIDE SEQUENCE [LARGE SCALE GENOMIC DNA]</scope>
    <source>
        <strain>Sterne</strain>
    </source>
</reference>
<reference key="3">
    <citation type="journal article" date="2009" name="J. Bacteriol.">
        <title>The complete genome sequence of Bacillus anthracis Ames 'Ancestor'.</title>
        <authorList>
            <person name="Ravel J."/>
            <person name="Jiang L."/>
            <person name="Stanley S.T."/>
            <person name="Wilson M.R."/>
            <person name="Decker R.S."/>
            <person name="Read T.D."/>
            <person name="Worsham P."/>
            <person name="Keim P.S."/>
            <person name="Salzberg S.L."/>
            <person name="Fraser-Liggett C.M."/>
            <person name="Rasko D.A."/>
        </authorList>
    </citation>
    <scope>NUCLEOTIDE SEQUENCE [LARGE SCALE GENOMIC DNA]</scope>
    <source>
        <strain>Ames ancestor</strain>
    </source>
</reference>
<organism>
    <name type="scientific">Bacillus anthracis</name>
    <dbReference type="NCBI Taxonomy" id="1392"/>
    <lineage>
        <taxon>Bacteria</taxon>
        <taxon>Bacillati</taxon>
        <taxon>Bacillota</taxon>
        <taxon>Bacilli</taxon>
        <taxon>Bacillales</taxon>
        <taxon>Bacillaceae</taxon>
        <taxon>Bacillus</taxon>
        <taxon>Bacillus cereus group</taxon>
    </lineage>
</organism>
<protein>
    <recommendedName>
        <fullName evidence="1">Anhydro-N-acetylmuramic acid kinase</fullName>
        <ecNumber evidence="1">2.7.1.170</ecNumber>
    </recommendedName>
    <alternativeName>
        <fullName evidence="1">AnhMurNAc kinase</fullName>
    </alternativeName>
</protein>
<dbReference type="EC" id="2.7.1.170" evidence="1"/>
<dbReference type="EMBL" id="AE016879">
    <property type="protein sequence ID" value="AAP26327.1"/>
    <property type="molecule type" value="Genomic_DNA"/>
</dbReference>
<dbReference type="EMBL" id="AE017225">
    <property type="protein sequence ID" value="AAT54605.1"/>
    <property type="molecule type" value="Genomic_DNA"/>
</dbReference>
<dbReference type="EMBL" id="AE017334">
    <property type="protein sequence ID" value="AAT31579.1"/>
    <property type="molecule type" value="Genomic_DNA"/>
</dbReference>
<dbReference type="RefSeq" id="NP_844841.1">
    <property type="nucleotide sequence ID" value="NC_003997.3"/>
</dbReference>
<dbReference type="RefSeq" id="WP_000274995.1">
    <property type="nucleotide sequence ID" value="NZ_WXXJ01000008.1"/>
</dbReference>
<dbReference type="RefSeq" id="YP_028554.1">
    <property type="nucleotide sequence ID" value="NC_005945.1"/>
</dbReference>
<dbReference type="SMR" id="Q81QG0"/>
<dbReference type="IntAct" id="Q81QG0">
    <property type="interactions" value="7"/>
</dbReference>
<dbReference type="STRING" id="261594.GBAA_2465"/>
<dbReference type="DNASU" id="1088523"/>
<dbReference type="GeneID" id="45022336"/>
<dbReference type="KEGG" id="ban:BA_2465"/>
<dbReference type="KEGG" id="bar:GBAA_2465"/>
<dbReference type="KEGG" id="bat:BAS2293"/>
<dbReference type="PATRIC" id="fig|198094.11.peg.2435"/>
<dbReference type="eggNOG" id="COG2377">
    <property type="taxonomic scope" value="Bacteria"/>
</dbReference>
<dbReference type="HOGENOM" id="CLU_038782_1_0_9"/>
<dbReference type="OMA" id="TGPGNMV"/>
<dbReference type="OrthoDB" id="9763949at2"/>
<dbReference type="UniPathway" id="UPA00343"/>
<dbReference type="UniPathway" id="UPA00544"/>
<dbReference type="Proteomes" id="UP000000427">
    <property type="component" value="Chromosome"/>
</dbReference>
<dbReference type="Proteomes" id="UP000000594">
    <property type="component" value="Chromosome"/>
</dbReference>
<dbReference type="GO" id="GO:0005524">
    <property type="term" value="F:ATP binding"/>
    <property type="evidence" value="ECO:0007669"/>
    <property type="project" value="UniProtKB-UniRule"/>
</dbReference>
<dbReference type="GO" id="GO:0016301">
    <property type="term" value="F:kinase activity"/>
    <property type="evidence" value="ECO:0007669"/>
    <property type="project" value="UniProtKB-KW"/>
</dbReference>
<dbReference type="GO" id="GO:0016773">
    <property type="term" value="F:phosphotransferase activity, alcohol group as acceptor"/>
    <property type="evidence" value="ECO:0007669"/>
    <property type="project" value="UniProtKB-UniRule"/>
</dbReference>
<dbReference type="GO" id="GO:0097175">
    <property type="term" value="P:1,6-anhydro-N-acetyl-beta-muramic acid catabolic process"/>
    <property type="evidence" value="ECO:0007669"/>
    <property type="project" value="UniProtKB-UniRule"/>
</dbReference>
<dbReference type="GO" id="GO:0006040">
    <property type="term" value="P:amino sugar metabolic process"/>
    <property type="evidence" value="ECO:0007669"/>
    <property type="project" value="InterPro"/>
</dbReference>
<dbReference type="GO" id="GO:0009254">
    <property type="term" value="P:peptidoglycan turnover"/>
    <property type="evidence" value="ECO:0007669"/>
    <property type="project" value="UniProtKB-UniRule"/>
</dbReference>
<dbReference type="CDD" id="cd24050">
    <property type="entry name" value="ASKHA_NBD_ANMK"/>
    <property type="match status" value="1"/>
</dbReference>
<dbReference type="Gene3D" id="3.30.420.40">
    <property type="match status" value="2"/>
</dbReference>
<dbReference type="HAMAP" id="MF_01270">
    <property type="entry name" value="AnhMurNAc_kinase"/>
    <property type="match status" value="1"/>
</dbReference>
<dbReference type="InterPro" id="IPR005338">
    <property type="entry name" value="Anhydro_N_Ac-Mur_kinase"/>
</dbReference>
<dbReference type="InterPro" id="IPR043129">
    <property type="entry name" value="ATPase_NBD"/>
</dbReference>
<dbReference type="NCBIfam" id="NF007142">
    <property type="entry name" value="PRK09585.2-1"/>
    <property type="match status" value="1"/>
</dbReference>
<dbReference type="NCBIfam" id="NF007148">
    <property type="entry name" value="PRK09585.3-2"/>
    <property type="match status" value="1"/>
</dbReference>
<dbReference type="PANTHER" id="PTHR30605">
    <property type="entry name" value="ANHYDRO-N-ACETYLMURAMIC ACID KINASE"/>
    <property type="match status" value="1"/>
</dbReference>
<dbReference type="PANTHER" id="PTHR30605:SF0">
    <property type="entry name" value="ANHYDRO-N-ACETYLMURAMIC ACID KINASE"/>
    <property type="match status" value="1"/>
</dbReference>
<dbReference type="Pfam" id="PF03702">
    <property type="entry name" value="AnmK"/>
    <property type="match status" value="1"/>
</dbReference>
<dbReference type="SUPFAM" id="SSF53067">
    <property type="entry name" value="Actin-like ATPase domain"/>
    <property type="match status" value="1"/>
</dbReference>
<evidence type="ECO:0000255" key="1">
    <source>
        <dbReference type="HAMAP-Rule" id="MF_01270"/>
    </source>
</evidence>
<feature type="chain" id="PRO_0000249970" description="Anhydro-N-acetylmuramic acid kinase">
    <location>
        <begin position="1"/>
        <end position="382"/>
    </location>
</feature>
<feature type="binding site" evidence="1">
    <location>
        <begin position="9"/>
        <end position="16"/>
    </location>
    <ligand>
        <name>ATP</name>
        <dbReference type="ChEBI" id="CHEBI:30616"/>
    </ligand>
</feature>
<keyword id="KW-0067">ATP-binding</keyword>
<keyword id="KW-0119">Carbohydrate metabolism</keyword>
<keyword id="KW-0418">Kinase</keyword>
<keyword id="KW-0547">Nucleotide-binding</keyword>
<keyword id="KW-1185">Reference proteome</keyword>
<keyword id="KW-0808">Transferase</keyword>
<gene>
    <name evidence="1" type="primary">anmK</name>
    <name type="ordered locus">BA_2465</name>
    <name type="ordered locus">GBAA_2465</name>
    <name type="ordered locus">BAS2293</name>
</gene>
<name>ANMK_BACAN</name>
<sequence>MYIAGVMSGTSLDGIDVALVRIEGSGVESKVELIHFTTVPFCNDIKSEIQQALSIENSNVQLICSLNFKLGLCFANAVKEVCKEANFSLEQLDLIGSHGQTIYHQPKQDGNRIPSTLQIGEPAVIAYETNTTVISNFRTMDMAAGGQGAPLVPYSEVILYRDPSKNRLLQNIGGISNVTVIPNQQSDQNVIAFDTGPGNMIIDEVCQRLFQLSYDQNGEIAKQGRVVDEILTYCMSHPFLKMNPPKSTGREQFGEKFASELLKRFEKHSKENILTTVTMFTANSIVHHYKKFILPYYEIDEVILGGGGSYNSTLVEMLRNGLKDENCAIFIQEDIGYSSEAKEAIAFAILANETHHCNPSNVPSATGAKQSVVFGNITFPPV</sequence>